<comment type="function">
    <text evidence="1">Blocks interferon-dependent interphase and stimulates DNA synthesis in cells.</text>
</comment>
<comment type="subunit">
    <text evidence="1">Heterotetramer of two type I and two type II keratins. Interacts with eukaryotic translation initiator factor 3 (eIF3) subunit EIF3S10. Interacts with GPER1 (By similarity).</text>
</comment>
<comment type="PTM">
    <text evidence="2">Arg-20 is dimethylated, probably to asymmetric dimethylarginine.</text>
</comment>
<comment type="miscellaneous">
    <text evidence="5">There are two types of cytoskeletal and microfibrillar keratin: I (acidic; 40-55 kDa) and II (neutral to basic; 56-70 kDa).</text>
</comment>
<comment type="similarity">
    <text evidence="4">Belongs to the intermediate filament family.</text>
</comment>
<gene>
    <name evidence="6" type="primary">KRT7</name>
</gene>
<reference evidence="6" key="1">
    <citation type="submission" date="2006-02" db="EMBL/GenBank/DDBJ databases">
        <authorList>
            <consortium name="NIH - Mammalian Gene Collection (MGC) project"/>
        </authorList>
    </citation>
    <scope>NUCLEOTIDE SEQUENCE [LARGE SCALE MRNA]</scope>
    <source>
        <strain evidence="6">Hereford</strain>
        <tissue evidence="6">Uterus</tissue>
    </source>
</reference>
<accession>Q29S21</accession>
<evidence type="ECO:0000250" key="1"/>
<evidence type="ECO:0000250" key="2">
    <source>
        <dbReference type="UniProtKB" id="P08729"/>
    </source>
</evidence>
<evidence type="ECO:0000255" key="3"/>
<evidence type="ECO:0000255" key="4">
    <source>
        <dbReference type="PROSITE-ProRule" id="PRU01188"/>
    </source>
</evidence>
<evidence type="ECO:0000305" key="5"/>
<evidence type="ECO:0000312" key="6">
    <source>
        <dbReference type="EMBL" id="AAI13215.1"/>
    </source>
</evidence>
<protein>
    <recommendedName>
        <fullName>Keratin, type II cytoskeletal 7</fullName>
    </recommendedName>
    <alternativeName>
        <fullName>Cytokeratin-7</fullName>
        <shortName>CK-7</shortName>
    </alternativeName>
    <alternativeName>
        <fullName>Keratin-7</fullName>
        <shortName>K7</shortName>
    </alternativeName>
    <alternativeName>
        <fullName>Type-II keratin Kb7</fullName>
    </alternativeName>
</protein>
<organism>
    <name type="scientific">Bos taurus</name>
    <name type="common">Bovine</name>
    <dbReference type="NCBI Taxonomy" id="9913"/>
    <lineage>
        <taxon>Eukaryota</taxon>
        <taxon>Metazoa</taxon>
        <taxon>Chordata</taxon>
        <taxon>Craniata</taxon>
        <taxon>Vertebrata</taxon>
        <taxon>Euteleostomi</taxon>
        <taxon>Mammalia</taxon>
        <taxon>Eutheria</taxon>
        <taxon>Laurasiatheria</taxon>
        <taxon>Artiodactyla</taxon>
        <taxon>Ruminantia</taxon>
        <taxon>Pecora</taxon>
        <taxon>Bovidae</taxon>
        <taxon>Bovinae</taxon>
        <taxon>Bos</taxon>
    </lineage>
</organism>
<name>K2C7_BOVIN</name>
<proteinExistence type="evidence at transcript level"/>
<keyword id="KW-0007">Acetylation</keyword>
<keyword id="KW-0175">Coiled coil</keyword>
<keyword id="KW-0325">Glycoprotein</keyword>
<keyword id="KW-0403">Intermediate filament</keyword>
<keyword id="KW-1017">Isopeptide bond</keyword>
<keyword id="KW-0416">Keratin</keyword>
<keyword id="KW-0488">Methylation</keyword>
<keyword id="KW-0597">Phosphoprotein</keyword>
<keyword id="KW-1185">Reference proteome</keyword>
<keyword id="KW-0832">Ubl conjugation</keyword>
<dbReference type="EMBL" id="BC113214">
    <property type="protein sequence ID" value="AAI13215.1"/>
    <property type="molecule type" value="mRNA"/>
</dbReference>
<dbReference type="RefSeq" id="NP_001039876.1">
    <property type="nucleotide sequence ID" value="NM_001046411.1"/>
</dbReference>
<dbReference type="SMR" id="Q29S21"/>
<dbReference type="FunCoup" id="Q29S21">
    <property type="interactions" value="44"/>
</dbReference>
<dbReference type="STRING" id="9913.ENSBTAP00000021516"/>
<dbReference type="GlyGen" id="Q29S21">
    <property type="glycosylation" value="1 site"/>
</dbReference>
<dbReference type="PaxDb" id="9913-ENSBTAP00000021516"/>
<dbReference type="PeptideAtlas" id="Q29S21"/>
<dbReference type="GeneID" id="535697"/>
<dbReference type="KEGG" id="bta:535697"/>
<dbReference type="CTD" id="3855"/>
<dbReference type="VEuPathDB" id="HostDB:ENSBTAG00000016165"/>
<dbReference type="eggNOG" id="ENOG502QURK">
    <property type="taxonomic scope" value="Eukaryota"/>
</dbReference>
<dbReference type="HOGENOM" id="CLU_012560_5_4_1"/>
<dbReference type="InParanoid" id="Q29S21"/>
<dbReference type="OMA" id="QRSKQEM"/>
<dbReference type="OrthoDB" id="2441647at2759"/>
<dbReference type="TreeFam" id="TF317854"/>
<dbReference type="Reactome" id="R-BTA-6805567">
    <property type="pathway name" value="Keratinization"/>
</dbReference>
<dbReference type="Reactome" id="R-BTA-6809371">
    <property type="pathway name" value="Formation of the cornified envelope"/>
</dbReference>
<dbReference type="Proteomes" id="UP000009136">
    <property type="component" value="Chromosome 5"/>
</dbReference>
<dbReference type="Bgee" id="ENSBTAG00000016165">
    <property type="expression patterns" value="Expressed in parenchyma of mammary gland and 85 other cell types or tissues"/>
</dbReference>
<dbReference type="GO" id="GO:0045095">
    <property type="term" value="C:keratin filament"/>
    <property type="evidence" value="ECO:0000318"/>
    <property type="project" value="GO_Central"/>
</dbReference>
<dbReference type="GO" id="GO:0030280">
    <property type="term" value="F:structural constituent of skin epidermis"/>
    <property type="evidence" value="ECO:0000318"/>
    <property type="project" value="GO_Central"/>
</dbReference>
<dbReference type="GO" id="GO:0045109">
    <property type="term" value="P:intermediate filament organization"/>
    <property type="evidence" value="ECO:0000318"/>
    <property type="project" value="GO_Central"/>
</dbReference>
<dbReference type="GO" id="GO:0031424">
    <property type="term" value="P:keratinization"/>
    <property type="evidence" value="ECO:0000318"/>
    <property type="project" value="GO_Central"/>
</dbReference>
<dbReference type="FunFam" id="1.20.5.1160:FF:000001">
    <property type="entry name" value="Keratin type II"/>
    <property type="match status" value="1"/>
</dbReference>
<dbReference type="FunFam" id="1.20.5.170:FF:000004">
    <property type="entry name" value="Keratin, type II cytoskeletal 5"/>
    <property type="match status" value="1"/>
</dbReference>
<dbReference type="FunFam" id="1.20.5.500:FF:000001">
    <property type="entry name" value="Type II keratin 23"/>
    <property type="match status" value="1"/>
</dbReference>
<dbReference type="Gene3D" id="1.20.5.170">
    <property type="match status" value="1"/>
</dbReference>
<dbReference type="Gene3D" id="1.20.5.500">
    <property type="entry name" value="Single helix bin"/>
    <property type="match status" value="1"/>
</dbReference>
<dbReference type="Gene3D" id="1.20.5.1160">
    <property type="entry name" value="Vasodilator-stimulated phosphoprotein"/>
    <property type="match status" value="1"/>
</dbReference>
<dbReference type="InterPro" id="IPR018039">
    <property type="entry name" value="IF_conserved"/>
</dbReference>
<dbReference type="InterPro" id="IPR039008">
    <property type="entry name" value="IF_rod_dom"/>
</dbReference>
<dbReference type="InterPro" id="IPR032444">
    <property type="entry name" value="Keratin_2_head"/>
</dbReference>
<dbReference type="InterPro" id="IPR003054">
    <property type="entry name" value="Keratin_II"/>
</dbReference>
<dbReference type="PANTHER" id="PTHR45616">
    <property type="entry name" value="GATA-TYPE DOMAIN-CONTAINING PROTEIN"/>
    <property type="match status" value="1"/>
</dbReference>
<dbReference type="PANTHER" id="PTHR45616:SF21">
    <property type="entry name" value="KERATIN, TYPE II CYTOSKELETAL 7"/>
    <property type="match status" value="1"/>
</dbReference>
<dbReference type="Pfam" id="PF00038">
    <property type="entry name" value="Filament"/>
    <property type="match status" value="1"/>
</dbReference>
<dbReference type="Pfam" id="PF16208">
    <property type="entry name" value="Keratin_2_head"/>
    <property type="match status" value="1"/>
</dbReference>
<dbReference type="PRINTS" id="PR01276">
    <property type="entry name" value="TYPE2KERATIN"/>
</dbReference>
<dbReference type="SMART" id="SM01391">
    <property type="entry name" value="Filament"/>
    <property type="match status" value="1"/>
</dbReference>
<dbReference type="SUPFAM" id="SSF64593">
    <property type="entry name" value="Intermediate filament protein, coiled coil region"/>
    <property type="match status" value="3"/>
</dbReference>
<dbReference type="PROSITE" id="PS00226">
    <property type="entry name" value="IF_ROD_1"/>
    <property type="match status" value="1"/>
</dbReference>
<dbReference type="PROSITE" id="PS51842">
    <property type="entry name" value="IF_ROD_2"/>
    <property type="match status" value="1"/>
</dbReference>
<sequence length="466" mass="51578">MSLHFGSQVFSSRSAAFPGRGTQVRLSSVRPGGFGSSSSLYGLGASRPRVAARSSYGAPVGTGIRAVTINQSLLTPLQVDIDPSIQQVRQEEREQIKTLNNKFASFIDKVRFLEQQNKLLETKWALLQEQKSAKSNRLPGIFEAQIAGLRKQLEALQLDGGRLEVELRNMQDVVEDFKNKYEDEINHRTAAENEFVVLKKDVDVAYMNKVELEAKVDTLNDEINFLRTLYEQELKELQSEVSDTSVVLSMDNNRSLDLDSIIAEVKAQYEEIANRSRAEAEACYQTKFETLQAQAGKHGDDLQNTRNEIADMNRAVQRLQAEIDSVKNQRSKLEAAIADAEQRGELAVKDARAKQEDLEAALQKAKQDMTRQLREYQELMNVKLALDIEIATYRKLLEGEESRLTGDGVGAVNISVVSSTGGSGSLLTFGGTMGNNALRFSSGGGPGTLKAYSMRTTSATSRSPRK</sequence>
<feature type="initiator methionine" description="Removed" evidence="2">
    <location>
        <position position="1"/>
    </location>
</feature>
<feature type="chain" id="PRO_0000307634" description="Keratin, type II cytoskeletal 7">
    <location>
        <begin position="2"/>
        <end position="466"/>
    </location>
</feature>
<feature type="domain" description="IF rod" evidence="4">
    <location>
        <begin position="92"/>
        <end position="404"/>
    </location>
</feature>
<feature type="region of interest" description="Head" evidence="3">
    <location>
        <begin position="2"/>
        <end position="91"/>
    </location>
</feature>
<feature type="region of interest" description="Coil 1A" evidence="3">
    <location>
        <begin position="91"/>
        <end position="127"/>
    </location>
</feature>
<feature type="region of interest" description="Linker 1" evidence="3">
    <location>
        <begin position="128"/>
        <end position="145"/>
    </location>
</feature>
<feature type="region of interest" description="Coil 1B" evidence="3">
    <location>
        <begin position="146"/>
        <end position="237"/>
    </location>
</feature>
<feature type="region of interest" description="Linker 12" evidence="3">
    <location>
        <begin position="238"/>
        <end position="261"/>
    </location>
</feature>
<feature type="region of interest" description="Coil 2" evidence="3">
    <location>
        <begin position="262"/>
        <end position="400"/>
    </location>
</feature>
<feature type="region of interest" description="Tail" evidence="3">
    <location>
        <begin position="401"/>
        <end position="466"/>
    </location>
</feature>
<feature type="site" description="Stutter" evidence="3">
    <location>
        <position position="344"/>
    </location>
</feature>
<feature type="modified residue" description="N-acetylserine" evidence="2">
    <location>
        <position position="2"/>
    </location>
</feature>
<feature type="modified residue" description="Phosphoserine" evidence="2">
    <location>
        <position position="2"/>
    </location>
</feature>
<feature type="modified residue" description="Phosphoserine" evidence="2">
    <location>
        <position position="7"/>
    </location>
</feature>
<feature type="modified residue" description="Dimethylated arginine; alternate" evidence="2">
    <location>
        <position position="20"/>
    </location>
</feature>
<feature type="modified residue" description="Omega-N-methylarginine; alternate" evidence="2">
    <location>
        <position position="20"/>
    </location>
</feature>
<feature type="modified residue" description="Phosphoserine" evidence="2">
    <location>
        <position position="54"/>
    </location>
</feature>
<feature type="modified residue" description="Phosphoserine" evidence="2">
    <location>
        <position position="72"/>
    </location>
</feature>
<feature type="modified residue" description="Phosphoserine" evidence="2">
    <location>
        <position position="84"/>
    </location>
</feature>
<feature type="modified residue" description="Phosphothreonine" evidence="2">
    <location>
        <position position="98"/>
    </location>
</feature>
<feature type="modified residue" description="N6-acetyllysine" evidence="2">
    <location>
        <position position="180"/>
    </location>
</feature>
<feature type="modified residue" description="Phosphoserine" evidence="2">
    <location>
        <position position="255"/>
    </location>
</feature>
<feature type="modified residue" description="Phosphothreonine" evidence="2">
    <location>
        <position position="290"/>
    </location>
</feature>
<feature type="glycosylation site" description="O-linked (GlcNAc) serine" evidence="2">
    <location>
        <position position="12"/>
    </location>
</feature>
<feature type="cross-link" description="Glycyl lysine isopeptide (Lys-Gly) (interchain with G-Cter in SUMO2)" evidence="2">
    <location>
        <position position="131"/>
    </location>
</feature>
<feature type="cross-link" description="Glycyl lysine isopeptide (Lys-Gly) (interchain with G-Cter in SUMO2)" evidence="2">
    <location>
        <position position="266"/>
    </location>
</feature>
<feature type="cross-link" description="Glycyl lysine isopeptide (Lys-Gly) (interchain with G-Cter in SUMO2)" evidence="2">
    <location>
        <position position="287"/>
    </location>
</feature>
<feature type="cross-link" description="Glycyl lysine isopeptide (Lys-Gly) (interchain with G-Cter in SUMO2)" evidence="2">
    <location>
        <position position="297"/>
    </location>
</feature>
<feature type="cross-link" description="Glycyl lysine isopeptide (Lys-Gly) (interchain with G-Cter in SUMO2)" evidence="2">
    <location>
        <position position="332"/>
    </location>
</feature>